<dbReference type="GO" id="GO:0005576">
    <property type="term" value="C:extracellular region"/>
    <property type="evidence" value="ECO:0007669"/>
    <property type="project" value="UniProtKB-SubCell"/>
</dbReference>
<dbReference type="GO" id="GO:0090729">
    <property type="term" value="F:toxin activity"/>
    <property type="evidence" value="ECO:0007669"/>
    <property type="project" value="UniProtKB-KW"/>
</dbReference>
<dbReference type="GO" id="GO:0006952">
    <property type="term" value="P:defense response"/>
    <property type="evidence" value="ECO:0007669"/>
    <property type="project" value="UniProtKB-KW"/>
</dbReference>
<dbReference type="GO" id="GO:0042311">
    <property type="term" value="P:vasodilation"/>
    <property type="evidence" value="ECO:0007669"/>
    <property type="project" value="UniProtKB-KW"/>
</dbReference>
<evidence type="ECO:0000250" key="1"/>
<evidence type="ECO:0000269" key="2">
    <source>
    </source>
</evidence>
<evidence type="ECO:0000303" key="3">
    <source>
    </source>
</evidence>
<evidence type="ECO:0000305" key="4"/>
<accession>P85885</accession>
<name>BRK4_PITAZ</name>
<sequence length="9" mass="1060">RPPGFSPFR</sequence>
<feature type="peptide" id="PRO_0000372705" description="[Hyp3]-bradykinin" evidence="2">
    <location>
        <begin position="1"/>
        <end position="9"/>
    </location>
</feature>
<feature type="modified residue" description="4-hydroxyproline" evidence="2">
    <location>
        <position position="3"/>
    </location>
</feature>
<organism>
    <name type="scientific">Pithecopus azureus</name>
    <name type="common">Orange-legged monkey tree frog</name>
    <name type="synonym">Phyllomedusa azurea</name>
    <dbReference type="NCBI Taxonomy" id="2034991"/>
    <lineage>
        <taxon>Eukaryota</taxon>
        <taxon>Metazoa</taxon>
        <taxon>Chordata</taxon>
        <taxon>Craniata</taxon>
        <taxon>Vertebrata</taxon>
        <taxon>Euteleostomi</taxon>
        <taxon>Amphibia</taxon>
        <taxon>Batrachia</taxon>
        <taxon>Anura</taxon>
        <taxon>Neobatrachia</taxon>
        <taxon>Hyloidea</taxon>
        <taxon>Hylidae</taxon>
        <taxon>Phyllomedusinae</taxon>
        <taxon>Pithecopus</taxon>
    </lineage>
</organism>
<proteinExistence type="evidence at protein level"/>
<protein>
    <recommendedName>
        <fullName evidence="3">[Hyp3]-bradykinin</fullName>
    </recommendedName>
</protein>
<reference evidence="4" key="1">
    <citation type="journal article" date="2006" name="Rapid Commun. Mass Spectrom.">
        <title>Bradykinin-related peptides from Phyllomedusa hypochondrialis azurea: Mass spectrometric structural characterisation and cloning of precursor cDNAs.</title>
        <authorList>
            <person name="Thompson A.H."/>
            <person name="Bjourson A.J."/>
            <person name="Shaw C."/>
            <person name="McClean S."/>
        </authorList>
    </citation>
    <scope>PROTEIN SEQUENCE</scope>
    <scope>SUBCELLULAR LOCATION</scope>
    <scope>TISSUE SPECIFICITY</scope>
    <scope>MASS SPECTROMETRY</scope>
    <scope>HYDROXYLATION AT PRO-3</scope>
    <source>
        <tissue evidence="2">Skin secretion</tissue>
    </source>
</reference>
<keyword id="KW-0878">Amphibian defense peptide</keyword>
<keyword id="KW-0903">Direct protein sequencing</keyword>
<keyword id="KW-1213">G-protein coupled receptor impairing toxin</keyword>
<keyword id="KW-0379">Hydroxylation</keyword>
<keyword id="KW-0964">Secreted</keyword>
<keyword id="KW-0800">Toxin</keyword>
<keyword id="KW-0838">Vasoactive</keyword>
<keyword id="KW-0840">Vasodilator</keyword>
<comment type="function">
    <text evidence="1">Induces relaxation of arterial smooth muscle, by targeting bradykinin receptors (BDKRB).</text>
</comment>
<comment type="subcellular location">
    <subcellularLocation>
        <location evidence="2">Secreted</location>
    </subcellularLocation>
</comment>
<comment type="tissue specificity">
    <text evidence="2">Expressed by the skin glands.</text>
</comment>
<comment type="mass spectrometry" mass="1075.57" method="MALDI" evidence="2"/>
<comment type="similarity">
    <text evidence="4">Belongs to the bradykinin-related peptide family.</text>
</comment>